<sequence>MYKPICGLARDGLPIIGVFALATLVFALLRWPCLATISLLSTIFSFNFFRDPDRTSPTENGIAVSPADGVVCKLGEAADPITGEMRQVVCVFMNVFNVHVNRSPVTGVVSEVRYIPGKFFNASLDKASTDNERNVIVVTDAEGARFTVVQIAGLIARRIVCPAKAGDTLSRGERYGMIKFGSRLDVYLPHGYHPAVAMGQKTMAGVTVLAKKAD</sequence>
<accession>C4XPA6</accession>
<dbReference type="EC" id="4.1.1.65" evidence="1"/>
<dbReference type="EMBL" id="AP010904">
    <property type="protein sequence ID" value="BAH75087.1"/>
    <property type="molecule type" value="Genomic_DNA"/>
</dbReference>
<dbReference type="RefSeq" id="WP_015860292.1">
    <property type="nucleotide sequence ID" value="NC_012796.1"/>
</dbReference>
<dbReference type="SMR" id="C4XPA6"/>
<dbReference type="STRING" id="573370.DMR_15960"/>
<dbReference type="KEGG" id="dma:DMR_15960"/>
<dbReference type="eggNOG" id="COG0688">
    <property type="taxonomic scope" value="Bacteria"/>
</dbReference>
<dbReference type="HOGENOM" id="CLU_072492_0_0_7"/>
<dbReference type="OrthoDB" id="9790893at2"/>
<dbReference type="UniPathway" id="UPA00558">
    <property type="reaction ID" value="UER00616"/>
</dbReference>
<dbReference type="Proteomes" id="UP000009071">
    <property type="component" value="Chromosome"/>
</dbReference>
<dbReference type="GO" id="GO:0005886">
    <property type="term" value="C:plasma membrane"/>
    <property type="evidence" value="ECO:0007669"/>
    <property type="project" value="UniProtKB-SubCell"/>
</dbReference>
<dbReference type="GO" id="GO:0004609">
    <property type="term" value="F:phosphatidylserine decarboxylase activity"/>
    <property type="evidence" value="ECO:0007669"/>
    <property type="project" value="UniProtKB-UniRule"/>
</dbReference>
<dbReference type="GO" id="GO:0006646">
    <property type="term" value="P:phosphatidylethanolamine biosynthetic process"/>
    <property type="evidence" value="ECO:0007669"/>
    <property type="project" value="UniProtKB-UniRule"/>
</dbReference>
<dbReference type="HAMAP" id="MF_00664">
    <property type="entry name" value="PS_decarb_PSD_A"/>
    <property type="match status" value="1"/>
</dbReference>
<dbReference type="InterPro" id="IPR003817">
    <property type="entry name" value="PS_Dcarbxylase"/>
</dbReference>
<dbReference type="InterPro" id="IPR033175">
    <property type="entry name" value="PSD-A"/>
</dbReference>
<dbReference type="NCBIfam" id="NF003678">
    <property type="entry name" value="PRK05305.1-2"/>
    <property type="match status" value="1"/>
</dbReference>
<dbReference type="NCBIfam" id="NF003685">
    <property type="entry name" value="PRK05305.2-5"/>
    <property type="match status" value="1"/>
</dbReference>
<dbReference type="PANTHER" id="PTHR35809">
    <property type="entry name" value="ARCHAETIDYLSERINE DECARBOXYLASE PROENZYME-RELATED"/>
    <property type="match status" value="1"/>
</dbReference>
<dbReference type="PANTHER" id="PTHR35809:SF1">
    <property type="entry name" value="ARCHAETIDYLSERINE DECARBOXYLASE PROENZYME-RELATED"/>
    <property type="match status" value="1"/>
</dbReference>
<dbReference type="Pfam" id="PF02666">
    <property type="entry name" value="PS_Dcarbxylase"/>
    <property type="match status" value="1"/>
</dbReference>
<name>PSD_SOLM1</name>
<reference key="1">
    <citation type="journal article" date="2009" name="Genome Res.">
        <title>Whole genome sequence of Desulfovibrio magneticus strain RS-1 revealed common gene clusters in magnetotactic bacteria.</title>
        <authorList>
            <person name="Nakazawa H."/>
            <person name="Arakaki A."/>
            <person name="Narita-Yamada S."/>
            <person name="Yashiro I."/>
            <person name="Jinno K."/>
            <person name="Aoki N."/>
            <person name="Tsuruyama A."/>
            <person name="Okamura Y."/>
            <person name="Tanikawa S."/>
            <person name="Fujita N."/>
            <person name="Takeyama H."/>
            <person name="Matsunaga T."/>
        </authorList>
    </citation>
    <scope>NUCLEOTIDE SEQUENCE [LARGE SCALE GENOMIC DNA]</scope>
    <source>
        <strain>ATCC 700980 / DSM 13731 / RS-1</strain>
    </source>
</reference>
<protein>
    <recommendedName>
        <fullName evidence="1">Phosphatidylserine decarboxylase proenzyme</fullName>
        <ecNumber evidence="1">4.1.1.65</ecNumber>
    </recommendedName>
    <component>
        <recommendedName>
            <fullName evidence="1">Phosphatidylserine decarboxylase alpha chain</fullName>
        </recommendedName>
    </component>
    <component>
        <recommendedName>
            <fullName evidence="1">Phosphatidylserine decarboxylase beta chain</fullName>
        </recommendedName>
    </component>
</protein>
<proteinExistence type="inferred from homology"/>
<evidence type="ECO:0000255" key="1">
    <source>
        <dbReference type="HAMAP-Rule" id="MF_00664"/>
    </source>
</evidence>
<comment type="function">
    <text evidence="1">Catalyzes the formation of phosphatidylethanolamine (PtdEtn) from phosphatidylserine (PtdSer).</text>
</comment>
<comment type="catalytic activity">
    <reaction evidence="1">
        <text>a 1,2-diacyl-sn-glycero-3-phospho-L-serine + H(+) = a 1,2-diacyl-sn-glycero-3-phosphoethanolamine + CO2</text>
        <dbReference type="Rhea" id="RHEA:20828"/>
        <dbReference type="ChEBI" id="CHEBI:15378"/>
        <dbReference type="ChEBI" id="CHEBI:16526"/>
        <dbReference type="ChEBI" id="CHEBI:57262"/>
        <dbReference type="ChEBI" id="CHEBI:64612"/>
        <dbReference type="EC" id="4.1.1.65"/>
    </reaction>
</comment>
<comment type="cofactor">
    <cofactor evidence="1">
        <name>pyruvate</name>
        <dbReference type="ChEBI" id="CHEBI:15361"/>
    </cofactor>
    <text evidence="1">Binds 1 pyruvoyl group covalently per subunit.</text>
</comment>
<comment type="pathway">
    <text evidence="1">Phospholipid metabolism; phosphatidylethanolamine biosynthesis; phosphatidylethanolamine from CDP-diacylglycerol: step 2/2.</text>
</comment>
<comment type="subunit">
    <text evidence="1">Heterodimer of a large membrane-associated beta subunit and a small pyruvoyl-containing alpha subunit.</text>
</comment>
<comment type="subcellular location">
    <subcellularLocation>
        <location evidence="1">Cell membrane</location>
        <topology evidence="1">Peripheral membrane protein</topology>
    </subcellularLocation>
</comment>
<comment type="PTM">
    <text evidence="1">Is synthesized initially as an inactive proenzyme. Formation of the active enzyme involves a self-maturation process in which the active site pyruvoyl group is generated from an internal serine residue via an autocatalytic post-translational modification. Two non-identical subunits are generated from the proenzyme in this reaction, and the pyruvate is formed at the N-terminus of the alpha chain, which is derived from the carboxyl end of the proenzyme. The post-translation cleavage follows an unusual pathway, termed non-hydrolytic serinolysis, in which the side chain hydroxyl group of the serine supplies its oxygen atom to form the C-terminus of the beta chain, while the remainder of the serine residue undergoes an oxidative deamination to produce ammonia and the pyruvoyl prosthetic group on the alpha chain.</text>
</comment>
<comment type="similarity">
    <text evidence="1">Belongs to the phosphatidylserine decarboxylase family. PSD-A subfamily.</text>
</comment>
<organism>
    <name type="scientific">Solidesulfovibrio magneticus (strain ATCC 700980 / DSM 13731 / RS-1)</name>
    <name type="common">Desulfovibrio magneticus</name>
    <dbReference type="NCBI Taxonomy" id="573370"/>
    <lineage>
        <taxon>Bacteria</taxon>
        <taxon>Pseudomonadati</taxon>
        <taxon>Thermodesulfobacteriota</taxon>
        <taxon>Desulfovibrionia</taxon>
        <taxon>Desulfovibrionales</taxon>
        <taxon>Desulfovibrionaceae</taxon>
        <taxon>Solidesulfovibrio</taxon>
    </lineage>
</organism>
<gene>
    <name evidence="1" type="primary">psd</name>
    <name type="ordered locus">DMR_15960</name>
</gene>
<keyword id="KW-1003">Cell membrane</keyword>
<keyword id="KW-0210">Decarboxylase</keyword>
<keyword id="KW-0444">Lipid biosynthesis</keyword>
<keyword id="KW-0443">Lipid metabolism</keyword>
<keyword id="KW-0456">Lyase</keyword>
<keyword id="KW-0472">Membrane</keyword>
<keyword id="KW-0594">Phospholipid biosynthesis</keyword>
<keyword id="KW-1208">Phospholipid metabolism</keyword>
<keyword id="KW-0670">Pyruvate</keyword>
<keyword id="KW-0865">Zymogen</keyword>
<feature type="chain" id="PRO_1000212493" description="Phosphatidylserine decarboxylase beta chain" evidence="1">
    <location>
        <begin position="1"/>
        <end position="181"/>
    </location>
</feature>
<feature type="chain" id="PRO_1000212494" description="Phosphatidylserine decarboxylase alpha chain" evidence="1">
    <location>
        <begin position="182"/>
        <end position="214"/>
    </location>
</feature>
<feature type="active site" description="Schiff-base intermediate with substrate; via pyruvic acid" evidence="1">
    <location>
        <position position="182"/>
    </location>
</feature>
<feature type="site" description="Cleavage (non-hydrolytic); by autocatalysis" evidence="1">
    <location>
        <begin position="181"/>
        <end position="182"/>
    </location>
</feature>
<feature type="modified residue" description="Pyruvic acid (Ser); by autocatalysis" evidence="1">
    <location>
        <position position="182"/>
    </location>
</feature>